<organism>
    <name type="scientific">Secale cereale</name>
    <name type="common">Rye</name>
    <dbReference type="NCBI Taxonomy" id="4550"/>
    <lineage>
        <taxon>Eukaryota</taxon>
        <taxon>Viridiplantae</taxon>
        <taxon>Streptophyta</taxon>
        <taxon>Embryophyta</taxon>
        <taxon>Tracheophyta</taxon>
        <taxon>Spermatophyta</taxon>
        <taxon>Magnoliopsida</taxon>
        <taxon>Liliopsida</taxon>
        <taxon>Poales</taxon>
        <taxon>Poaceae</taxon>
        <taxon>BOP clade</taxon>
        <taxon>Pooideae</taxon>
        <taxon>Triticodae</taxon>
        <taxon>Triticeae</taxon>
        <taxon>Hordeinae</taxon>
        <taxon>Secale</taxon>
    </lineage>
</organism>
<accession>Q6YLW2</accession>
<feature type="chain" id="PRO_0000175494" description="DNA-directed RNA polymerase subunit alpha">
    <location>
        <begin position="1"/>
        <end position="339"/>
    </location>
</feature>
<feature type="region of interest" description="Alpha N-terminal domain (alpha-NTD)" evidence="1">
    <location>
        <begin position="1"/>
        <end position="233"/>
    </location>
</feature>
<feature type="region of interest" description="Alpha C-terminal domain (alpha-CTD)" evidence="1">
    <location>
        <begin position="266"/>
        <end position="339"/>
    </location>
</feature>
<sequence length="339" mass="38869">MVREEVAGSTQTLQWKCVESRVDSKRLYYGRFILSPLRKGQADTVGIALRRALLGEIEGTCITRAKFGSVPHEYSTIAGIEESVQEILLNLKEIVLRSNLYGVRDASICVKGPRYITAQDIILPPSVEIVDTAQPIANLTEPIDFCIDLQIKRDRGYQTELRKNYQDGSYPIDAVSMPVRNVNYSIFSCGNGNEKHEILFLEIWTNGSLTPKEALYEASRNLIDLFLPFLHAEEEGASFEENKNRFTPPLFTFQKRLTNLKKNKKGIPLNCIFIDQLELTSRTYNCLKRANIHTLLDLLSKTEEDLLRIDSFRMEDRKHIWDTLEKHLPIDLLKNKLSF</sequence>
<geneLocation type="chloroplast"/>
<gene>
    <name evidence="1" type="primary">rpoA</name>
</gene>
<comment type="function">
    <text evidence="1">DNA-dependent RNA polymerase catalyzes the transcription of DNA into RNA using the four ribonucleoside triphosphates as substrates.</text>
</comment>
<comment type="catalytic activity">
    <reaction evidence="1">
        <text>RNA(n) + a ribonucleoside 5'-triphosphate = RNA(n+1) + diphosphate</text>
        <dbReference type="Rhea" id="RHEA:21248"/>
        <dbReference type="Rhea" id="RHEA-COMP:14527"/>
        <dbReference type="Rhea" id="RHEA-COMP:17342"/>
        <dbReference type="ChEBI" id="CHEBI:33019"/>
        <dbReference type="ChEBI" id="CHEBI:61557"/>
        <dbReference type="ChEBI" id="CHEBI:140395"/>
        <dbReference type="EC" id="2.7.7.6"/>
    </reaction>
</comment>
<comment type="subunit">
    <text evidence="1">In plastids the minimal PEP RNA polymerase catalytic core is composed of four subunits: alpha, beta, beta', and beta''. When a (nuclear-encoded) sigma factor is associated with the core the holoenzyme is formed, which can initiate transcription.</text>
</comment>
<comment type="subcellular location">
    <subcellularLocation>
        <location>Plastid</location>
        <location>Chloroplast</location>
    </subcellularLocation>
</comment>
<comment type="domain">
    <text evidence="1">The N-terminal domain is essential for RNAP assembly and basal transcription, whereas the C-terminal domain is involved in interaction with transcriptional regulators and with upstream promoter elements.</text>
</comment>
<comment type="similarity">
    <text evidence="1">Belongs to the RNA polymerase alpha chain family.</text>
</comment>
<keyword id="KW-0150">Chloroplast</keyword>
<keyword id="KW-0240">DNA-directed RNA polymerase</keyword>
<keyword id="KW-0548">Nucleotidyltransferase</keyword>
<keyword id="KW-0934">Plastid</keyword>
<keyword id="KW-0804">Transcription</keyword>
<keyword id="KW-0808">Transferase</keyword>
<name>RPOA_SECCE</name>
<protein>
    <recommendedName>
        <fullName evidence="1">DNA-directed RNA polymerase subunit alpha</fullName>
        <shortName evidence="1">PEP</shortName>
        <ecNumber evidence="1">2.7.7.6</ecNumber>
    </recommendedName>
    <alternativeName>
        <fullName evidence="1">Plastid-encoded RNA polymerase subunit alpha</fullName>
        <shortName evidence="1">RNA polymerase subunit alpha</shortName>
    </alternativeName>
</protein>
<evidence type="ECO:0000255" key="1">
    <source>
        <dbReference type="HAMAP-Rule" id="MF_00059"/>
    </source>
</evidence>
<reference key="1">
    <citation type="journal article" date="2002" name="Genome">
        <title>Phylogenetic analysis of North American Elymus and the monogenomic Triticeae (Poaceae) using three chloroplast DNA data sets.</title>
        <authorList>
            <person name="Mason-Gamer R.J."/>
            <person name="Orme N.L."/>
            <person name="Anderson C.M."/>
        </authorList>
    </citation>
    <scope>NUCLEOTIDE SEQUENCE [GENOMIC DNA]</scope>
</reference>
<dbReference type="EC" id="2.7.7.6" evidence="1"/>
<dbReference type="EMBL" id="AY115961">
    <property type="protein sequence ID" value="AAM97470.1"/>
    <property type="molecule type" value="Genomic_DNA"/>
</dbReference>
<dbReference type="RefSeq" id="YP_008239201.1">
    <property type="nucleotide sequence ID" value="NC_021761.1"/>
</dbReference>
<dbReference type="SMR" id="Q6YLW2"/>
<dbReference type="GeneID" id="16792714"/>
<dbReference type="GO" id="GO:0009507">
    <property type="term" value="C:chloroplast"/>
    <property type="evidence" value="ECO:0007669"/>
    <property type="project" value="UniProtKB-SubCell"/>
</dbReference>
<dbReference type="GO" id="GO:0000428">
    <property type="term" value="C:DNA-directed RNA polymerase complex"/>
    <property type="evidence" value="ECO:0007669"/>
    <property type="project" value="UniProtKB-KW"/>
</dbReference>
<dbReference type="GO" id="GO:0005739">
    <property type="term" value="C:mitochondrion"/>
    <property type="evidence" value="ECO:0007669"/>
    <property type="project" value="GOC"/>
</dbReference>
<dbReference type="GO" id="GO:0003677">
    <property type="term" value="F:DNA binding"/>
    <property type="evidence" value="ECO:0007669"/>
    <property type="project" value="UniProtKB-UniRule"/>
</dbReference>
<dbReference type="GO" id="GO:0003899">
    <property type="term" value="F:DNA-directed RNA polymerase activity"/>
    <property type="evidence" value="ECO:0007669"/>
    <property type="project" value="UniProtKB-UniRule"/>
</dbReference>
<dbReference type="GO" id="GO:0046983">
    <property type="term" value="F:protein dimerization activity"/>
    <property type="evidence" value="ECO:0007669"/>
    <property type="project" value="InterPro"/>
</dbReference>
<dbReference type="GO" id="GO:0006351">
    <property type="term" value="P:DNA-templated transcription"/>
    <property type="evidence" value="ECO:0007669"/>
    <property type="project" value="UniProtKB-UniRule"/>
</dbReference>
<dbReference type="CDD" id="cd06928">
    <property type="entry name" value="RNAP_alpha_NTD"/>
    <property type="match status" value="1"/>
</dbReference>
<dbReference type="FunFam" id="2.170.120.12:FF:000001">
    <property type="entry name" value="DNA-directed RNA polymerase subunit alpha"/>
    <property type="match status" value="1"/>
</dbReference>
<dbReference type="Gene3D" id="1.10.150.20">
    <property type="entry name" value="5' to 3' exonuclease, C-terminal subdomain"/>
    <property type="match status" value="1"/>
</dbReference>
<dbReference type="Gene3D" id="2.170.120.12">
    <property type="entry name" value="DNA-directed RNA polymerase, insert domain"/>
    <property type="match status" value="1"/>
</dbReference>
<dbReference type="Gene3D" id="3.30.1360.10">
    <property type="entry name" value="RNA polymerase, RBP11-like subunit"/>
    <property type="match status" value="1"/>
</dbReference>
<dbReference type="HAMAP" id="MF_00059">
    <property type="entry name" value="RNApol_bact_RpoA"/>
    <property type="match status" value="1"/>
</dbReference>
<dbReference type="InterPro" id="IPR011262">
    <property type="entry name" value="DNA-dir_RNA_pol_insert"/>
</dbReference>
<dbReference type="InterPro" id="IPR011263">
    <property type="entry name" value="DNA-dir_RNA_pol_RpoA/D/Rpb3"/>
</dbReference>
<dbReference type="InterPro" id="IPR011773">
    <property type="entry name" value="DNA-dir_RpoA"/>
</dbReference>
<dbReference type="InterPro" id="IPR036603">
    <property type="entry name" value="RBP11-like"/>
</dbReference>
<dbReference type="InterPro" id="IPR011260">
    <property type="entry name" value="RNAP_asu_C"/>
</dbReference>
<dbReference type="InterPro" id="IPR036643">
    <property type="entry name" value="RNApol_insert_sf"/>
</dbReference>
<dbReference type="NCBIfam" id="TIGR02027">
    <property type="entry name" value="rpoA"/>
    <property type="match status" value="1"/>
</dbReference>
<dbReference type="Pfam" id="PF01000">
    <property type="entry name" value="RNA_pol_A_bac"/>
    <property type="match status" value="1"/>
</dbReference>
<dbReference type="Pfam" id="PF03118">
    <property type="entry name" value="RNA_pol_A_CTD"/>
    <property type="match status" value="1"/>
</dbReference>
<dbReference type="Pfam" id="PF01193">
    <property type="entry name" value="RNA_pol_L"/>
    <property type="match status" value="1"/>
</dbReference>
<dbReference type="SMART" id="SM00662">
    <property type="entry name" value="RPOLD"/>
    <property type="match status" value="1"/>
</dbReference>
<dbReference type="SUPFAM" id="SSF47789">
    <property type="entry name" value="C-terminal domain of RNA polymerase alpha subunit"/>
    <property type="match status" value="1"/>
</dbReference>
<dbReference type="SUPFAM" id="SSF56553">
    <property type="entry name" value="Insert subdomain of RNA polymerase alpha subunit"/>
    <property type="match status" value="1"/>
</dbReference>
<dbReference type="SUPFAM" id="SSF55257">
    <property type="entry name" value="RBP11-like subunits of RNA polymerase"/>
    <property type="match status" value="1"/>
</dbReference>
<proteinExistence type="inferred from homology"/>